<accession>A1VYM4</accession>
<proteinExistence type="inferred from homology"/>
<name>PUR7_CAMJJ</name>
<evidence type="ECO:0000255" key="1">
    <source>
        <dbReference type="HAMAP-Rule" id="MF_00137"/>
    </source>
</evidence>
<feature type="chain" id="PRO_1000018683" description="Phosphoribosylaminoimidazole-succinocarboxamide synthase">
    <location>
        <begin position="1"/>
        <end position="236"/>
    </location>
</feature>
<organism>
    <name type="scientific">Campylobacter jejuni subsp. jejuni serotype O:23/36 (strain 81-176)</name>
    <dbReference type="NCBI Taxonomy" id="354242"/>
    <lineage>
        <taxon>Bacteria</taxon>
        <taxon>Pseudomonadati</taxon>
        <taxon>Campylobacterota</taxon>
        <taxon>Epsilonproteobacteria</taxon>
        <taxon>Campylobacterales</taxon>
        <taxon>Campylobacteraceae</taxon>
        <taxon>Campylobacter</taxon>
    </lineage>
</organism>
<comment type="catalytic activity">
    <reaction evidence="1">
        <text>5-amino-1-(5-phospho-D-ribosyl)imidazole-4-carboxylate + L-aspartate + ATP = (2S)-2-[5-amino-1-(5-phospho-beta-D-ribosyl)imidazole-4-carboxamido]succinate + ADP + phosphate + 2 H(+)</text>
        <dbReference type="Rhea" id="RHEA:22628"/>
        <dbReference type="ChEBI" id="CHEBI:15378"/>
        <dbReference type="ChEBI" id="CHEBI:29991"/>
        <dbReference type="ChEBI" id="CHEBI:30616"/>
        <dbReference type="ChEBI" id="CHEBI:43474"/>
        <dbReference type="ChEBI" id="CHEBI:58443"/>
        <dbReference type="ChEBI" id="CHEBI:77657"/>
        <dbReference type="ChEBI" id="CHEBI:456216"/>
        <dbReference type="EC" id="6.3.2.6"/>
    </reaction>
</comment>
<comment type="pathway">
    <text evidence="1">Purine metabolism; IMP biosynthesis via de novo pathway; 5-amino-1-(5-phospho-D-ribosyl)imidazole-4-carboxamide from 5-amino-1-(5-phospho-D-ribosyl)imidazole-4-carboxylate: step 1/2.</text>
</comment>
<comment type="similarity">
    <text evidence="1">Belongs to the SAICAR synthetase family.</text>
</comment>
<reference key="1">
    <citation type="submission" date="2006-12" db="EMBL/GenBank/DDBJ databases">
        <authorList>
            <person name="Fouts D.E."/>
            <person name="Nelson K.E."/>
            <person name="Sebastian Y."/>
        </authorList>
    </citation>
    <scope>NUCLEOTIDE SEQUENCE [LARGE SCALE GENOMIC DNA]</scope>
    <source>
        <strain>81-176</strain>
    </source>
</reference>
<sequence length="236" mass="26926">MTKKEMLYEGKGKKLFKTDDENLLISEFKDDLTAFNAEKRGNESGKGALNCKISTEIFHLLEKNGIKTHLVETISDTEQVVKKCKIVPIEVIVRNVATGSLTKRLGIKDGTVLPFALVEFCLKDDALGDPFINDEHCLILNLVQNEAQISEIKNMARKINSILTPFFDNKNLRLIDFKIELGLTKDNELVLADEISPDSCRFWDKFSNEKLDKDRFRQDLGNVKMAYEEVLKRILN</sequence>
<keyword id="KW-0067">ATP-binding</keyword>
<keyword id="KW-0436">Ligase</keyword>
<keyword id="KW-0547">Nucleotide-binding</keyword>
<keyword id="KW-0658">Purine biosynthesis</keyword>
<protein>
    <recommendedName>
        <fullName evidence="1">Phosphoribosylaminoimidazole-succinocarboxamide synthase</fullName>
        <ecNumber evidence="1">6.3.2.6</ecNumber>
    </recommendedName>
    <alternativeName>
        <fullName evidence="1">SAICAR synthetase</fullName>
    </alternativeName>
</protein>
<gene>
    <name evidence="1" type="primary">purC</name>
    <name type="ordered locus">CJJ81176_0540</name>
</gene>
<dbReference type="EC" id="6.3.2.6" evidence="1"/>
<dbReference type="EMBL" id="CP000538">
    <property type="protein sequence ID" value="EAQ73331.1"/>
    <property type="molecule type" value="Genomic_DNA"/>
</dbReference>
<dbReference type="RefSeq" id="WP_002854922.1">
    <property type="nucleotide sequence ID" value="NC_008787.1"/>
</dbReference>
<dbReference type="SMR" id="A1VYM4"/>
<dbReference type="KEGG" id="cjj:CJJ81176_0540"/>
<dbReference type="eggNOG" id="COG0152">
    <property type="taxonomic scope" value="Bacteria"/>
</dbReference>
<dbReference type="HOGENOM" id="CLU_061495_2_0_7"/>
<dbReference type="UniPathway" id="UPA00074">
    <property type="reaction ID" value="UER00131"/>
</dbReference>
<dbReference type="Proteomes" id="UP000000646">
    <property type="component" value="Chromosome"/>
</dbReference>
<dbReference type="GO" id="GO:0005524">
    <property type="term" value="F:ATP binding"/>
    <property type="evidence" value="ECO:0007669"/>
    <property type="project" value="UniProtKB-KW"/>
</dbReference>
<dbReference type="GO" id="GO:0004639">
    <property type="term" value="F:phosphoribosylaminoimidazolesuccinocarboxamide synthase activity"/>
    <property type="evidence" value="ECO:0007669"/>
    <property type="project" value="UniProtKB-UniRule"/>
</dbReference>
<dbReference type="GO" id="GO:0006189">
    <property type="term" value="P:'de novo' IMP biosynthetic process"/>
    <property type="evidence" value="ECO:0007669"/>
    <property type="project" value="UniProtKB-UniRule"/>
</dbReference>
<dbReference type="GO" id="GO:0009236">
    <property type="term" value="P:cobalamin biosynthetic process"/>
    <property type="evidence" value="ECO:0007669"/>
    <property type="project" value="InterPro"/>
</dbReference>
<dbReference type="CDD" id="cd01415">
    <property type="entry name" value="SAICAR_synt_PurC"/>
    <property type="match status" value="1"/>
</dbReference>
<dbReference type="FunFam" id="3.30.470.20:FF:000006">
    <property type="entry name" value="Phosphoribosylaminoimidazole-succinocarboxamide synthase"/>
    <property type="match status" value="1"/>
</dbReference>
<dbReference type="Gene3D" id="3.30.470.20">
    <property type="entry name" value="ATP-grasp fold, B domain"/>
    <property type="match status" value="1"/>
</dbReference>
<dbReference type="Gene3D" id="3.30.200.20">
    <property type="entry name" value="Phosphorylase Kinase, domain 1"/>
    <property type="match status" value="1"/>
</dbReference>
<dbReference type="HAMAP" id="MF_00137">
    <property type="entry name" value="SAICAR_synth"/>
    <property type="match status" value="1"/>
</dbReference>
<dbReference type="InterPro" id="IPR028923">
    <property type="entry name" value="SAICAR_synt/ADE2_N"/>
</dbReference>
<dbReference type="InterPro" id="IPR033934">
    <property type="entry name" value="SAICAR_synt_PurC"/>
</dbReference>
<dbReference type="InterPro" id="IPR001636">
    <property type="entry name" value="SAICAR_synth"/>
</dbReference>
<dbReference type="InterPro" id="IPR050089">
    <property type="entry name" value="SAICAR_synthetase"/>
</dbReference>
<dbReference type="InterPro" id="IPR018236">
    <property type="entry name" value="SAICAR_synthetase_CS"/>
</dbReference>
<dbReference type="NCBIfam" id="TIGR00081">
    <property type="entry name" value="purC"/>
    <property type="match status" value="1"/>
</dbReference>
<dbReference type="PANTHER" id="PTHR43599">
    <property type="entry name" value="MULTIFUNCTIONAL PROTEIN ADE2"/>
    <property type="match status" value="1"/>
</dbReference>
<dbReference type="PANTHER" id="PTHR43599:SF3">
    <property type="entry name" value="SI:DKEY-6E2.2"/>
    <property type="match status" value="1"/>
</dbReference>
<dbReference type="Pfam" id="PF01259">
    <property type="entry name" value="SAICAR_synt"/>
    <property type="match status" value="1"/>
</dbReference>
<dbReference type="SUPFAM" id="SSF56104">
    <property type="entry name" value="SAICAR synthase-like"/>
    <property type="match status" value="1"/>
</dbReference>
<dbReference type="PROSITE" id="PS01057">
    <property type="entry name" value="SAICAR_SYNTHETASE_1"/>
    <property type="match status" value="1"/>
</dbReference>